<gene>
    <name type="primary">amiF</name>
    <name type="ordered locus">HP_1238</name>
</gene>
<proteinExistence type="evidence at protein level"/>
<evidence type="ECO:0000250" key="1"/>
<evidence type="ECO:0000255" key="2">
    <source>
        <dbReference type="PROSITE-ProRule" id="PRU00054"/>
    </source>
</evidence>
<evidence type="ECO:0000269" key="3">
    <source>
    </source>
</evidence>
<evidence type="ECO:0000269" key="4">
    <source>
    </source>
</evidence>
<evidence type="ECO:0000305" key="5"/>
<evidence type="ECO:0000305" key="6">
    <source>
    </source>
</evidence>
<evidence type="ECO:0007829" key="7">
    <source>
        <dbReference type="PDB" id="2DYU"/>
    </source>
</evidence>
<evidence type="ECO:0007829" key="8">
    <source>
        <dbReference type="PDB" id="2E2L"/>
    </source>
</evidence>
<comment type="function">
    <text evidence="3">Is an aliphatic amidase with a restricted substrate specificity, as it only hydrolyzes formamide. Probably involved in the nitrogen metabolism of H.pylori.</text>
</comment>
<comment type="catalytic activity">
    <reaction evidence="3">
        <text>formamide + H2O = formate + NH4(+)</text>
        <dbReference type="Rhea" id="RHEA:21948"/>
        <dbReference type="ChEBI" id="CHEBI:15377"/>
        <dbReference type="ChEBI" id="CHEBI:15740"/>
        <dbReference type="ChEBI" id="CHEBI:16397"/>
        <dbReference type="ChEBI" id="CHEBI:28938"/>
        <dbReference type="EC" id="3.5.1.49"/>
    </reaction>
</comment>
<comment type="activity regulation">
    <text evidence="3 4">Inhibited by iodoacetate. Appears to be regulated by the fur protein, but this effect is not mediated at the transcriptional level.</text>
</comment>
<comment type="biophysicochemical properties">
    <phDependence>
        <text evidence="3">Optimum pH is 6.</text>
    </phDependence>
    <temperatureDependence>
        <text evidence="3">Optimum temperature is 45 degrees Celsius.</text>
    </temperatureDependence>
</comment>
<comment type="subunit">
    <text evidence="3">Homotetramer.</text>
</comment>
<comment type="induction">
    <text evidence="4">Unlike the other amidase AmiE, expression of amiF is not repressed by iron.</text>
</comment>
<comment type="miscellaneous">
    <text evidence="6">Asp-168 is probably not involved in the catalytic mechanism, but is probably involved instead in maintenance of the structural integrity of the amidase.</text>
</comment>
<comment type="miscellaneous">
    <text>Expression of the amiF gene is stimulated in a mutant deficient in arginase activity, suggesting that production of this enzyme is regulated to maintain intracellular nitrogen balance in H.pylori.</text>
</comment>
<comment type="similarity">
    <text evidence="5">Belongs to the carbon-nitrogen hydrolase superfamily. Aliphatic amidase family.</text>
</comment>
<sequence>MGSIGSMGKPIEGFLVAAIQFPVPIVNSRKDIDHNIESIIRTLHATKAGYPGVELIIFPEYSTQGLNTAKWLSEEFLLDVPGKETELYAKACKEAKVYGVFSIMERNPDSNKNPYNTAIIIDPQGEIILKYRKLFPWNPIEPWYPGDLGMPVCEGPGGSKLAVCICHDGMIPELAREAAYKGCNVYIRISGYSTQVNDQWILTNRSNAWHNLMYTVSVNLAGYDNVFYYFGEGQICNFDGTTLVQGHRNPWEIVTGEIYPKMADNARLSWGLENNIYNLGHRGYVAKPGGEHDAGLTYIKDLAAGKYKLPWEDHMKIKDGSIYGYPTTGGRFGK</sequence>
<organism>
    <name type="scientific">Helicobacter pylori (strain ATCC 700392 / 26695)</name>
    <name type="common">Campylobacter pylori</name>
    <dbReference type="NCBI Taxonomy" id="85962"/>
    <lineage>
        <taxon>Bacteria</taxon>
        <taxon>Pseudomonadati</taxon>
        <taxon>Campylobacterota</taxon>
        <taxon>Epsilonproteobacteria</taxon>
        <taxon>Campylobacterales</taxon>
        <taxon>Helicobacteraceae</taxon>
        <taxon>Helicobacter</taxon>
    </lineage>
</organism>
<feature type="chain" id="PRO_0000204065" description="Formamidase">
    <location>
        <begin position="1"/>
        <end position="334"/>
    </location>
</feature>
<feature type="domain" description="CN hydrolase" evidence="2">
    <location>
        <begin position="14"/>
        <end position="260"/>
    </location>
</feature>
<feature type="active site" description="Proton acceptor" evidence="1">
    <location>
        <position position="60"/>
    </location>
</feature>
<feature type="active site" description="Proton donor" evidence="1">
    <location>
        <position position="133"/>
    </location>
</feature>
<feature type="active site" description="Nucleophile" evidence="1">
    <location>
        <position position="166"/>
    </location>
</feature>
<feature type="mutagenesis site" description="Loss of activity." evidence="3">
    <original>C</original>
    <variation>S</variation>
    <variation>A</variation>
    <location>
        <position position="166"/>
    </location>
</feature>
<feature type="mutagenesis site" description="Loss of activity." evidence="3">
    <original>D</original>
    <variation>A</variation>
    <location>
        <position position="168"/>
    </location>
</feature>
<feature type="strand" evidence="7">
    <location>
        <begin position="14"/>
        <end position="19"/>
    </location>
</feature>
<feature type="helix" evidence="7">
    <location>
        <begin position="29"/>
        <end position="49"/>
    </location>
</feature>
<feature type="strand" evidence="7">
    <location>
        <begin position="53"/>
        <end position="57"/>
    </location>
</feature>
<feature type="turn" evidence="7">
    <location>
        <begin position="60"/>
        <end position="64"/>
    </location>
</feature>
<feature type="turn" evidence="7">
    <location>
        <begin position="68"/>
        <end position="72"/>
    </location>
</feature>
<feature type="helix" evidence="7">
    <location>
        <begin position="74"/>
        <end position="76"/>
    </location>
</feature>
<feature type="strand" evidence="7">
    <location>
        <begin position="80"/>
        <end position="82"/>
    </location>
</feature>
<feature type="helix" evidence="7">
    <location>
        <begin position="83"/>
        <end position="95"/>
    </location>
</feature>
<feature type="strand" evidence="7">
    <location>
        <begin position="98"/>
        <end position="105"/>
    </location>
</feature>
<feature type="strand" evidence="7">
    <location>
        <begin position="115"/>
        <end position="121"/>
    </location>
</feature>
<feature type="strand" evidence="7">
    <location>
        <begin position="127"/>
        <end position="132"/>
    </location>
</feature>
<feature type="turn" evidence="7">
    <location>
        <begin position="138"/>
        <end position="140"/>
    </location>
</feature>
<feature type="helix" evidence="7">
    <location>
        <begin position="156"/>
        <end position="158"/>
    </location>
</feature>
<feature type="strand" evidence="7">
    <location>
        <begin position="160"/>
        <end position="165"/>
    </location>
</feature>
<feature type="helix" evidence="7">
    <location>
        <begin position="166"/>
        <end position="170"/>
    </location>
</feature>
<feature type="helix" evidence="7">
    <location>
        <begin position="172"/>
        <end position="180"/>
    </location>
</feature>
<feature type="strand" evidence="7">
    <location>
        <begin position="184"/>
        <end position="192"/>
    </location>
</feature>
<feature type="strand" evidence="8">
    <location>
        <begin position="194"/>
        <end position="196"/>
    </location>
</feature>
<feature type="helix" evidence="7">
    <location>
        <begin position="197"/>
        <end position="211"/>
    </location>
</feature>
<feature type="strand" evidence="7">
    <location>
        <begin position="214"/>
        <end position="219"/>
    </location>
</feature>
<feature type="strand" evidence="7">
    <location>
        <begin position="221"/>
        <end position="226"/>
    </location>
</feature>
<feature type="strand" evidence="7">
    <location>
        <begin position="232"/>
        <end position="236"/>
    </location>
</feature>
<feature type="strand" evidence="7">
    <location>
        <begin position="242"/>
        <end position="245"/>
    </location>
</feature>
<feature type="strand" evidence="7">
    <location>
        <begin position="253"/>
        <end position="258"/>
    </location>
</feature>
<feature type="helix" evidence="7">
    <location>
        <begin position="260"/>
        <end position="269"/>
    </location>
</feature>
<feature type="helix" evidence="7">
    <location>
        <begin position="275"/>
        <end position="278"/>
    </location>
</feature>
<feature type="turn" evidence="7">
    <location>
        <begin position="284"/>
        <end position="288"/>
    </location>
</feature>
<feature type="helix" evidence="7">
    <location>
        <begin position="297"/>
        <end position="303"/>
    </location>
</feature>
<feature type="helix" evidence="7">
    <location>
        <begin position="312"/>
        <end position="314"/>
    </location>
</feature>
<feature type="strand" evidence="7">
    <location>
        <begin position="318"/>
        <end position="320"/>
    </location>
</feature>
<feature type="helix" evidence="7">
    <location>
        <begin position="321"/>
        <end position="323"/>
    </location>
</feature>
<name>AMIF_HELPY</name>
<reference key="1">
    <citation type="journal article" date="1997" name="Nature">
        <title>The complete genome sequence of the gastric pathogen Helicobacter pylori.</title>
        <authorList>
            <person name="Tomb J.-F."/>
            <person name="White O."/>
            <person name="Kerlavage A.R."/>
            <person name="Clayton R.A."/>
            <person name="Sutton G.G."/>
            <person name="Fleischmann R.D."/>
            <person name="Ketchum K.A."/>
            <person name="Klenk H.-P."/>
            <person name="Gill S.R."/>
            <person name="Dougherty B.A."/>
            <person name="Nelson K.E."/>
            <person name="Quackenbush J."/>
            <person name="Zhou L."/>
            <person name="Kirkness E.F."/>
            <person name="Peterson S.N."/>
            <person name="Loftus B.J."/>
            <person name="Richardson D.L."/>
            <person name="Dodson R.J."/>
            <person name="Khalak H.G."/>
            <person name="Glodek A."/>
            <person name="McKenney K."/>
            <person name="FitzGerald L.M."/>
            <person name="Lee N."/>
            <person name="Adams M.D."/>
            <person name="Hickey E.K."/>
            <person name="Berg D.E."/>
            <person name="Gocayne J.D."/>
            <person name="Utterback T.R."/>
            <person name="Peterson J.D."/>
            <person name="Kelley J.M."/>
            <person name="Cotton M.D."/>
            <person name="Weidman J.F."/>
            <person name="Fujii C."/>
            <person name="Bowman C."/>
            <person name="Watthey L."/>
            <person name="Wallin E."/>
            <person name="Hayes W.S."/>
            <person name="Borodovsky M."/>
            <person name="Karp P.D."/>
            <person name="Smith H.O."/>
            <person name="Fraser C.M."/>
            <person name="Venter J.C."/>
        </authorList>
    </citation>
    <scope>NUCLEOTIDE SEQUENCE [LARGE SCALE GENOMIC DNA]</scope>
    <source>
        <strain>ATCC 700392 / 26695</strain>
    </source>
</reference>
<reference key="2">
    <citation type="journal article" date="2001" name="Mol. Microbiol.">
        <title>The AmiE aliphatic amidase and AmiF formamidase of Helicobacter pylori: natural evolution of two enzyme paralogues.</title>
        <authorList>
            <person name="Skouloubris S."/>
            <person name="Labigne A."/>
            <person name="De Reuse H."/>
        </authorList>
    </citation>
    <scope>FUNCTION</scope>
    <scope>CATALYTIC ACTIVITY</scope>
    <scope>ACTIVITY REGULATION</scope>
    <scope>BIOPHYSICOCHEMICAL PROPERTIES</scope>
    <scope>SUBUNIT</scope>
    <scope>MUTAGENESIS OF CYS-166 AND ASP-168</scope>
</reference>
<reference key="3">
    <citation type="journal article" date="2003" name="J. Biol. Chem.">
        <title>Differential regulation of amidase- and formamidase-mediated ammonia production by the Helicobacter pylori fur repressor.</title>
        <authorList>
            <person name="van Vliet A.H.M."/>
            <person name="Stoof J."/>
            <person name="Poppelaars S.W."/>
            <person name="Bereswill S."/>
            <person name="Homuth G."/>
            <person name="Kist M."/>
            <person name="Kuipers E.J."/>
            <person name="Kusters J.G."/>
        </authorList>
    </citation>
    <scope>ACTIVITY REGULATION</scope>
    <scope>INDUCTION</scope>
</reference>
<accession>O25836</accession>
<dbReference type="EC" id="3.5.1.49"/>
<dbReference type="EMBL" id="AE000511">
    <property type="protein sequence ID" value="AAD08283.1"/>
    <property type="molecule type" value="Genomic_DNA"/>
</dbReference>
<dbReference type="PIR" id="F64674">
    <property type="entry name" value="F64674"/>
</dbReference>
<dbReference type="RefSeq" id="NP_208030.1">
    <property type="nucleotide sequence ID" value="NC_000915.1"/>
</dbReference>
<dbReference type="RefSeq" id="WP_000534771.1">
    <property type="nucleotide sequence ID" value="NC_018939.1"/>
</dbReference>
<dbReference type="PDB" id="2DYU">
    <property type="method" value="X-ray"/>
    <property type="resolution" value="1.75 A"/>
    <property type="chains" value="A/B=1-334"/>
</dbReference>
<dbReference type="PDB" id="2DYV">
    <property type="method" value="X-ray"/>
    <property type="resolution" value="2.00 A"/>
    <property type="chains" value="A/B=1-334"/>
</dbReference>
<dbReference type="PDB" id="2E2K">
    <property type="method" value="X-ray"/>
    <property type="resolution" value="2.50 A"/>
    <property type="chains" value="A/B/C/D/E/F=1-334"/>
</dbReference>
<dbReference type="PDB" id="2E2L">
    <property type="method" value="X-ray"/>
    <property type="resolution" value="2.29 A"/>
    <property type="chains" value="A/B/C/D/E/F=1-334"/>
</dbReference>
<dbReference type="PDBsum" id="2DYU"/>
<dbReference type="PDBsum" id="2DYV"/>
<dbReference type="PDBsum" id="2E2K"/>
<dbReference type="PDBsum" id="2E2L"/>
<dbReference type="SMR" id="O25836"/>
<dbReference type="IntAct" id="O25836">
    <property type="interactions" value="3"/>
</dbReference>
<dbReference type="MINT" id="O25836"/>
<dbReference type="STRING" id="85962.HP_1238"/>
<dbReference type="PaxDb" id="85962-C694_06390"/>
<dbReference type="EnsemblBacteria" id="AAD08283">
    <property type="protein sequence ID" value="AAD08283"/>
    <property type="gene ID" value="HP_1238"/>
</dbReference>
<dbReference type="KEGG" id="heo:C694_06390"/>
<dbReference type="KEGG" id="hpy:HP_1238"/>
<dbReference type="PATRIC" id="fig|85962.47.peg.1326"/>
<dbReference type="eggNOG" id="COG0388">
    <property type="taxonomic scope" value="Bacteria"/>
</dbReference>
<dbReference type="InParanoid" id="O25836"/>
<dbReference type="OrthoDB" id="9811121at2"/>
<dbReference type="PhylomeDB" id="O25836"/>
<dbReference type="BRENDA" id="3.5.1.49">
    <property type="organism ID" value="2604"/>
</dbReference>
<dbReference type="EvolutionaryTrace" id="O25836"/>
<dbReference type="Proteomes" id="UP000000429">
    <property type="component" value="Chromosome"/>
</dbReference>
<dbReference type="GO" id="GO:0004328">
    <property type="term" value="F:formamidase activity"/>
    <property type="evidence" value="ECO:0007669"/>
    <property type="project" value="UniProtKB-UniRule"/>
</dbReference>
<dbReference type="GO" id="GO:0050126">
    <property type="term" value="F:N-carbamoylputrescine amidase activity"/>
    <property type="evidence" value="ECO:0000318"/>
    <property type="project" value="GO_Central"/>
</dbReference>
<dbReference type="GO" id="GO:0033388">
    <property type="term" value="P:putrescine biosynthetic process from arginine"/>
    <property type="evidence" value="ECO:0000318"/>
    <property type="project" value="GO_Central"/>
</dbReference>
<dbReference type="CDD" id="cd07565">
    <property type="entry name" value="aliphatic_amidase"/>
    <property type="match status" value="1"/>
</dbReference>
<dbReference type="Gene3D" id="3.60.110.10">
    <property type="entry name" value="Carbon-nitrogen hydrolase"/>
    <property type="match status" value="1"/>
</dbReference>
<dbReference type="HAMAP" id="MF_01243">
    <property type="entry name" value="Formamidase"/>
    <property type="match status" value="1"/>
</dbReference>
<dbReference type="InterPro" id="IPR050345">
    <property type="entry name" value="Aliph_Amidase/BUP"/>
</dbReference>
<dbReference type="InterPro" id="IPR003010">
    <property type="entry name" value="C-N_Hydrolase"/>
</dbReference>
<dbReference type="InterPro" id="IPR036526">
    <property type="entry name" value="C-N_Hydrolase_sf"/>
</dbReference>
<dbReference type="InterPro" id="IPR022843">
    <property type="entry name" value="Formamidase"/>
</dbReference>
<dbReference type="NCBIfam" id="NF009803">
    <property type="entry name" value="PRK13287.1"/>
    <property type="match status" value="1"/>
</dbReference>
<dbReference type="PANTHER" id="PTHR43674:SF15">
    <property type="entry name" value="FORMAMIDASE"/>
    <property type="match status" value="1"/>
</dbReference>
<dbReference type="PANTHER" id="PTHR43674">
    <property type="entry name" value="NITRILASE C965.09-RELATED"/>
    <property type="match status" value="1"/>
</dbReference>
<dbReference type="Pfam" id="PF00795">
    <property type="entry name" value="CN_hydrolase"/>
    <property type="match status" value="1"/>
</dbReference>
<dbReference type="SUPFAM" id="SSF56317">
    <property type="entry name" value="Carbon-nitrogen hydrolase"/>
    <property type="match status" value="1"/>
</dbReference>
<dbReference type="PROSITE" id="PS50263">
    <property type="entry name" value="CN_HYDROLASE"/>
    <property type="match status" value="1"/>
</dbReference>
<keyword id="KW-0002">3D-structure</keyword>
<keyword id="KW-0378">Hydrolase</keyword>
<keyword id="KW-1185">Reference proteome</keyword>
<protein>
    <recommendedName>
        <fullName>Formamidase</fullName>
        <ecNumber>3.5.1.49</ecNumber>
    </recommendedName>
    <alternativeName>
        <fullName>Formamide amidohydrolase</fullName>
    </alternativeName>
</protein>